<feature type="chain" id="PRO_0000335280" description="5'-nucleotidase SurE">
    <location>
        <begin position="1"/>
        <end position="249"/>
    </location>
</feature>
<feature type="binding site" evidence="1">
    <location>
        <position position="9"/>
    </location>
    <ligand>
        <name>a divalent metal cation</name>
        <dbReference type="ChEBI" id="CHEBI:60240"/>
    </ligand>
</feature>
<feature type="binding site" evidence="1">
    <location>
        <position position="10"/>
    </location>
    <ligand>
        <name>a divalent metal cation</name>
        <dbReference type="ChEBI" id="CHEBI:60240"/>
    </ligand>
</feature>
<feature type="binding site" evidence="1">
    <location>
        <position position="40"/>
    </location>
    <ligand>
        <name>a divalent metal cation</name>
        <dbReference type="ChEBI" id="CHEBI:60240"/>
    </ligand>
</feature>
<feature type="binding site" evidence="1">
    <location>
        <position position="92"/>
    </location>
    <ligand>
        <name>a divalent metal cation</name>
        <dbReference type="ChEBI" id="CHEBI:60240"/>
    </ligand>
</feature>
<keyword id="KW-0963">Cytoplasm</keyword>
<keyword id="KW-0378">Hydrolase</keyword>
<keyword id="KW-0479">Metal-binding</keyword>
<keyword id="KW-0547">Nucleotide-binding</keyword>
<gene>
    <name evidence="1" type="primary">surE</name>
    <name type="ordered locus">Shewmr4_1120</name>
</gene>
<sequence length="249" mass="26595">MIRILVSNDDGVNAPGIKALTEALAEIATVMTVAPDRNCSGASNSLTLTNPLRINRLDNGYISVHGTPTDCVHLAIRELCDGEPDMVVSGINAGANMGDDTLYSGTVAAAMEGRFLGFPAVAISLNGKALKHYHSAAVYARRIVQGLLAHPIASDQILNINVPDLPLDEIKGIRVTRLGARHKAEGIVRTQDPAGREIFWLGPPGVEQDASEGTDFHAIAHGYVSITPLTVDLTAYRQLSVLQDWVDKI</sequence>
<evidence type="ECO:0000255" key="1">
    <source>
        <dbReference type="HAMAP-Rule" id="MF_00060"/>
    </source>
</evidence>
<accession>Q0HL67</accession>
<protein>
    <recommendedName>
        <fullName evidence="1">5'-nucleotidase SurE</fullName>
        <ecNumber evidence="1">3.1.3.5</ecNumber>
    </recommendedName>
    <alternativeName>
        <fullName evidence="1">Nucleoside 5'-monophosphate phosphohydrolase</fullName>
    </alternativeName>
</protein>
<organism>
    <name type="scientific">Shewanella sp. (strain MR-4)</name>
    <dbReference type="NCBI Taxonomy" id="60480"/>
    <lineage>
        <taxon>Bacteria</taxon>
        <taxon>Pseudomonadati</taxon>
        <taxon>Pseudomonadota</taxon>
        <taxon>Gammaproteobacteria</taxon>
        <taxon>Alteromonadales</taxon>
        <taxon>Shewanellaceae</taxon>
        <taxon>Shewanella</taxon>
    </lineage>
</organism>
<name>SURE_SHESM</name>
<reference key="1">
    <citation type="submission" date="2006-08" db="EMBL/GenBank/DDBJ databases">
        <title>Complete sequence of Shewanella sp. MR-4.</title>
        <authorList>
            <consortium name="US DOE Joint Genome Institute"/>
            <person name="Copeland A."/>
            <person name="Lucas S."/>
            <person name="Lapidus A."/>
            <person name="Barry K."/>
            <person name="Detter J.C."/>
            <person name="Glavina del Rio T."/>
            <person name="Hammon N."/>
            <person name="Israni S."/>
            <person name="Dalin E."/>
            <person name="Tice H."/>
            <person name="Pitluck S."/>
            <person name="Kiss H."/>
            <person name="Brettin T."/>
            <person name="Bruce D."/>
            <person name="Han C."/>
            <person name="Tapia R."/>
            <person name="Gilna P."/>
            <person name="Schmutz J."/>
            <person name="Larimer F."/>
            <person name="Land M."/>
            <person name="Hauser L."/>
            <person name="Kyrpides N."/>
            <person name="Mikhailova N."/>
            <person name="Nealson K."/>
            <person name="Konstantinidis K."/>
            <person name="Klappenbach J."/>
            <person name="Tiedje J."/>
            <person name="Richardson P."/>
        </authorList>
    </citation>
    <scope>NUCLEOTIDE SEQUENCE [LARGE SCALE GENOMIC DNA]</scope>
    <source>
        <strain>MR-4</strain>
    </source>
</reference>
<proteinExistence type="inferred from homology"/>
<dbReference type="EC" id="3.1.3.5" evidence="1"/>
<dbReference type="EMBL" id="CP000446">
    <property type="protein sequence ID" value="ABI38200.1"/>
    <property type="molecule type" value="Genomic_DNA"/>
</dbReference>
<dbReference type="RefSeq" id="WP_011621909.1">
    <property type="nucleotide sequence ID" value="NC_008321.1"/>
</dbReference>
<dbReference type="SMR" id="Q0HL67"/>
<dbReference type="KEGG" id="she:Shewmr4_1120"/>
<dbReference type="HOGENOM" id="CLU_045192_1_2_6"/>
<dbReference type="GO" id="GO:0005737">
    <property type="term" value="C:cytoplasm"/>
    <property type="evidence" value="ECO:0007669"/>
    <property type="project" value="UniProtKB-SubCell"/>
</dbReference>
<dbReference type="GO" id="GO:0008254">
    <property type="term" value="F:3'-nucleotidase activity"/>
    <property type="evidence" value="ECO:0007669"/>
    <property type="project" value="TreeGrafter"/>
</dbReference>
<dbReference type="GO" id="GO:0008253">
    <property type="term" value="F:5'-nucleotidase activity"/>
    <property type="evidence" value="ECO:0007669"/>
    <property type="project" value="UniProtKB-UniRule"/>
</dbReference>
<dbReference type="GO" id="GO:0004309">
    <property type="term" value="F:exopolyphosphatase activity"/>
    <property type="evidence" value="ECO:0007669"/>
    <property type="project" value="TreeGrafter"/>
</dbReference>
<dbReference type="GO" id="GO:0046872">
    <property type="term" value="F:metal ion binding"/>
    <property type="evidence" value="ECO:0007669"/>
    <property type="project" value="UniProtKB-UniRule"/>
</dbReference>
<dbReference type="GO" id="GO:0000166">
    <property type="term" value="F:nucleotide binding"/>
    <property type="evidence" value="ECO:0007669"/>
    <property type="project" value="UniProtKB-KW"/>
</dbReference>
<dbReference type="FunFam" id="3.40.1210.10:FF:000001">
    <property type="entry name" value="5'/3'-nucleotidase SurE"/>
    <property type="match status" value="1"/>
</dbReference>
<dbReference type="Gene3D" id="3.40.1210.10">
    <property type="entry name" value="Survival protein SurE-like phosphatase/nucleotidase"/>
    <property type="match status" value="1"/>
</dbReference>
<dbReference type="HAMAP" id="MF_00060">
    <property type="entry name" value="SurE"/>
    <property type="match status" value="1"/>
</dbReference>
<dbReference type="InterPro" id="IPR030048">
    <property type="entry name" value="SurE"/>
</dbReference>
<dbReference type="InterPro" id="IPR002828">
    <property type="entry name" value="SurE-like_Pase/nucleotidase"/>
</dbReference>
<dbReference type="InterPro" id="IPR036523">
    <property type="entry name" value="SurE-like_sf"/>
</dbReference>
<dbReference type="NCBIfam" id="NF001489">
    <property type="entry name" value="PRK00346.1-3"/>
    <property type="match status" value="1"/>
</dbReference>
<dbReference type="NCBIfam" id="NF001490">
    <property type="entry name" value="PRK00346.1-4"/>
    <property type="match status" value="1"/>
</dbReference>
<dbReference type="NCBIfam" id="TIGR00087">
    <property type="entry name" value="surE"/>
    <property type="match status" value="1"/>
</dbReference>
<dbReference type="PANTHER" id="PTHR30457">
    <property type="entry name" value="5'-NUCLEOTIDASE SURE"/>
    <property type="match status" value="1"/>
</dbReference>
<dbReference type="PANTHER" id="PTHR30457:SF12">
    <property type="entry name" value="5'_3'-NUCLEOTIDASE SURE"/>
    <property type="match status" value="1"/>
</dbReference>
<dbReference type="Pfam" id="PF01975">
    <property type="entry name" value="SurE"/>
    <property type="match status" value="1"/>
</dbReference>
<dbReference type="SUPFAM" id="SSF64167">
    <property type="entry name" value="SurE-like"/>
    <property type="match status" value="1"/>
</dbReference>
<comment type="function">
    <text evidence="1">Nucleotidase that shows phosphatase activity on nucleoside 5'-monophosphates.</text>
</comment>
<comment type="catalytic activity">
    <reaction evidence="1">
        <text>a ribonucleoside 5'-phosphate + H2O = a ribonucleoside + phosphate</text>
        <dbReference type="Rhea" id="RHEA:12484"/>
        <dbReference type="ChEBI" id="CHEBI:15377"/>
        <dbReference type="ChEBI" id="CHEBI:18254"/>
        <dbReference type="ChEBI" id="CHEBI:43474"/>
        <dbReference type="ChEBI" id="CHEBI:58043"/>
        <dbReference type="EC" id="3.1.3.5"/>
    </reaction>
</comment>
<comment type="cofactor">
    <cofactor evidence="1">
        <name>a divalent metal cation</name>
        <dbReference type="ChEBI" id="CHEBI:60240"/>
    </cofactor>
    <text evidence="1">Binds 1 divalent metal cation per subunit.</text>
</comment>
<comment type="subcellular location">
    <subcellularLocation>
        <location evidence="1">Cytoplasm</location>
    </subcellularLocation>
</comment>
<comment type="similarity">
    <text evidence="1">Belongs to the SurE nucleotidase family.</text>
</comment>